<dbReference type="EMBL" id="BC126013">
    <property type="protein sequence ID" value="AAI26014.1"/>
    <property type="molecule type" value="mRNA"/>
</dbReference>
<dbReference type="EMBL" id="BC170329">
    <property type="protein sequence ID" value="AAI70329.1"/>
    <property type="molecule type" value="mRNA"/>
</dbReference>
<dbReference type="RefSeq" id="NP_001128538.1">
    <property type="nucleotide sequence ID" value="NM_001135066.1"/>
</dbReference>
<dbReference type="DNASU" id="100189566"/>
<dbReference type="GeneID" id="100189566"/>
<dbReference type="KEGG" id="xla:100189566"/>
<dbReference type="AGR" id="Xenbase:XB-GENE-17335605"/>
<dbReference type="CTD" id="100189566"/>
<dbReference type="Xenbase" id="XB-GENE-17335605">
    <property type="gene designation" value="casc3.L"/>
</dbReference>
<dbReference type="OrthoDB" id="657902at2759"/>
<dbReference type="Proteomes" id="UP000186698">
    <property type="component" value="Chromosome 9_10L"/>
</dbReference>
<dbReference type="Bgee" id="100189566">
    <property type="expression patterns" value="Expressed in blastula and 19 other cell types or tissues"/>
</dbReference>
<dbReference type="GO" id="GO:0010494">
    <property type="term" value="C:cytoplasmic stress granule"/>
    <property type="evidence" value="ECO:0007669"/>
    <property type="project" value="UniProtKB-SubCell"/>
</dbReference>
<dbReference type="GO" id="GO:0030425">
    <property type="term" value="C:dendrite"/>
    <property type="evidence" value="ECO:0007669"/>
    <property type="project" value="UniProtKB-SubCell"/>
</dbReference>
<dbReference type="GO" id="GO:0035145">
    <property type="term" value="C:exon-exon junction complex"/>
    <property type="evidence" value="ECO:0000318"/>
    <property type="project" value="GO_Central"/>
</dbReference>
<dbReference type="GO" id="GO:0016607">
    <property type="term" value="C:nuclear speck"/>
    <property type="evidence" value="ECO:0007669"/>
    <property type="project" value="UniProtKB-SubCell"/>
</dbReference>
<dbReference type="GO" id="GO:0005634">
    <property type="term" value="C:nucleus"/>
    <property type="evidence" value="ECO:0000250"/>
    <property type="project" value="UniProtKB"/>
</dbReference>
<dbReference type="GO" id="GO:0048471">
    <property type="term" value="C:perinuclear region of cytoplasm"/>
    <property type="evidence" value="ECO:0007669"/>
    <property type="project" value="UniProtKB-SubCell"/>
</dbReference>
<dbReference type="GO" id="GO:0071006">
    <property type="term" value="C:U2-type catalytic step 1 spliceosome"/>
    <property type="evidence" value="ECO:0000250"/>
    <property type="project" value="UniProtKB"/>
</dbReference>
<dbReference type="GO" id="GO:0003729">
    <property type="term" value="F:mRNA binding"/>
    <property type="evidence" value="ECO:0007669"/>
    <property type="project" value="InterPro"/>
</dbReference>
<dbReference type="GO" id="GO:0000398">
    <property type="term" value="P:mRNA splicing, via spliceosome"/>
    <property type="evidence" value="ECO:0000250"/>
    <property type="project" value="UniProtKB"/>
</dbReference>
<dbReference type="GO" id="GO:0051028">
    <property type="term" value="P:mRNA transport"/>
    <property type="evidence" value="ECO:0007669"/>
    <property type="project" value="UniProtKB-KW"/>
</dbReference>
<dbReference type="GO" id="GO:0000184">
    <property type="term" value="P:nuclear-transcribed mRNA catabolic process, nonsense-mediated decay"/>
    <property type="evidence" value="ECO:0007669"/>
    <property type="project" value="UniProtKB-KW"/>
</dbReference>
<dbReference type="GO" id="GO:0006417">
    <property type="term" value="P:regulation of translation"/>
    <property type="evidence" value="ECO:0007669"/>
    <property type="project" value="UniProtKB-KW"/>
</dbReference>
<dbReference type="InterPro" id="IPR018545">
    <property type="entry name" value="Btz_dom"/>
</dbReference>
<dbReference type="InterPro" id="IPR028544">
    <property type="entry name" value="CASC3"/>
</dbReference>
<dbReference type="PANTHER" id="PTHR13434">
    <property type="entry name" value="PROTEIN CASC3"/>
    <property type="match status" value="1"/>
</dbReference>
<dbReference type="PANTHER" id="PTHR13434:SF0">
    <property type="entry name" value="PROTEIN CASC3"/>
    <property type="match status" value="1"/>
</dbReference>
<dbReference type="Pfam" id="PF09405">
    <property type="entry name" value="Btz"/>
    <property type="match status" value="1"/>
</dbReference>
<dbReference type="SMART" id="SM01044">
    <property type="entry name" value="Btz"/>
    <property type="match status" value="1"/>
</dbReference>
<name>CASC3_XENLA</name>
<keyword id="KW-0966">Cell projection</keyword>
<keyword id="KW-0963">Cytoplasm</keyword>
<keyword id="KW-0507">mRNA processing</keyword>
<keyword id="KW-0508">mRNA splicing</keyword>
<keyword id="KW-0509">mRNA transport</keyword>
<keyword id="KW-0866">Nonsense-mediated mRNA decay</keyword>
<keyword id="KW-0539">Nucleus</keyword>
<keyword id="KW-1185">Reference proteome</keyword>
<keyword id="KW-0694">RNA-binding</keyword>
<keyword id="KW-0747">Spliceosome</keyword>
<keyword id="KW-0810">Translation regulation</keyword>
<keyword id="KW-0813">Transport</keyword>
<organism>
    <name type="scientific">Xenopus laevis</name>
    <name type="common">African clawed frog</name>
    <dbReference type="NCBI Taxonomy" id="8355"/>
    <lineage>
        <taxon>Eukaryota</taxon>
        <taxon>Metazoa</taxon>
        <taxon>Chordata</taxon>
        <taxon>Craniata</taxon>
        <taxon>Vertebrata</taxon>
        <taxon>Euteleostomi</taxon>
        <taxon>Amphibia</taxon>
        <taxon>Batrachia</taxon>
        <taxon>Anura</taxon>
        <taxon>Pipoidea</taxon>
        <taxon>Pipidae</taxon>
        <taxon>Xenopodinae</taxon>
        <taxon>Xenopus</taxon>
        <taxon>Xenopus</taxon>
    </lineage>
</organism>
<sequence length="686" mass="76962">MADRRRRRRRASQDSEGEEEEEESGSDSVGSGGESGAPVRQERSEQGNRKAEPPREGKESECESEDGIEGDAVLSDYESADESEIVPTKEVEEAHYNEEEPLKATLKQENNVEEAPAARDQKPKSKGTVTGERQSGDGQESNEPEEDKTIQKSQKQLDDDEDRKNPAYIPRKGLFFEHDLRGHVNDEEVRPKGRHPRKLWKDEGRWVHDRFHEDEQAPKSREELISIYGYDIRSSKNPEEIRPRRPRKPRFSSPSRREENNEKASWPLNRYQDSGDAQPLRPYTNRSAPPSNKVVPSRTYSRQGGYKENRASYQSEEEASLHTYERRQVYGGHRARSSEQGPPPPREFSPEADPIVKEEAVIEKQAAEPSPPPPDRPVEKKSYSRARRSRIKVGDTGKSMEDTTAAELPPPPLMPPAVAAEFTPAPLNVKQGNWEPPAEGGMSGIDEELSQMNLTEQSWNQGQPAYISPRGIPNPMHMGNGPPQYSRMEGMAVQGGRVKRYSSQRQRPVPDPAAMHISLMESHYYDPLQFQGPIYTHGDSSSSMPPQGMIVPPEMHLSHPGMHPHPSPATMSTPNLYPAPVSLPPGQQPPQQLLPPPYFPAPPNVMNFGNPTYPYPPGALPPPPAHLYPNAQAQSQVYGGVTYYNPVQQQVQPKPSPPRRTSQPVTIKPPPPEENRHLKMNEKINS</sequence>
<protein>
    <recommendedName>
        <fullName>Protein CASC3</fullName>
    </recommendedName>
    <alternativeName>
        <fullName>Cancer susceptibility candidate gene 3 protein homolog</fullName>
    </alternativeName>
    <alternativeName>
        <fullName>Metastatic lymph node protein 51 homolog</fullName>
        <shortName>Protein MLN 51 homolog</shortName>
        <shortName>XlMLN51</shortName>
    </alternativeName>
</protein>
<feature type="chain" id="PRO_0000379475" description="Protein CASC3">
    <location>
        <begin position="1"/>
        <end position="686"/>
    </location>
</feature>
<feature type="region of interest" description="Disordered" evidence="4">
    <location>
        <begin position="1"/>
        <end position="419"/>
    </location>
</feature>
<feature type="region of interest" description="Disordered" evidence="4">
    <location>
        <begin position="646"/>
        <end position="686"/>
    </location>
</feature>
<feature type="compositionally biased region" description="Basic residues" evidence="4">
    <location>
        <begin position="1"/>
        <end position="10"/>
    </location>
</feature>
<feature type="compositionally biased region" description="Acidic residues" evidence="4">
    <location>
        <begin position="15"/>
        <end position="25"/>
    </location>
</feature>
<feature type="compositionally biased region" description="Basic and acidic residues" evidence="4">
    <location>
        <begin position="40"/>
        <end position="61"/>
    </location>
</feature>
<feature type="compositionally biased region" description="Basic and acidic residues" evidence="4">
    <location>
        <begin position="87"/>
        <end position="102"/>
    </location>
</feature>
<feature type="compositionally biased region" description="Polar residues" evidence="4">
    <location>
        <begin position="127"/>
        <end position="139"/>
    </location>
</feature>
<feature type="compositionally biased region" description="Basic and acidic residues" evidence="4">
    <location>
        <begin position="174"/>
        <end position="191"/>
    </location>
</feature>
<feature type="compositionally biased region" description="Basic and acidic residues" evidence="4">
    <location>
        <begin position="199"/>
        <end position="224"/>
    </location>
</feature>
<feature type="compositionally biased region" description="Basic and acidic residues" evidence="4">
    <location>
        <begin position="233"/>
        <end position="243"/>
    </location>
</feature>
<feature type="compositionally biased region" description="Basic and acidic residues" evidence="4">
    <location>
        <begin position="319"/>
        <end position="328"/>
    </location>
</feature>
<feature type="compositionally biased region" description="Basic and acidic residues" evidence="4">
    <location>
        <begin position="354"/>
        <end position="366"/>
    </location>
</feature>
<feature type="compositionally biased region" description="Basic and acidic residues" evidence="4">
    <location>
        <begin position="392"/>
        <end position="401"/>
    </location>
</feature>
<feature type="compositionally biased region" description="Basic and acidic residues" evidence="4">
    <location>
        <begin position="671"/>
        <end position="686"/>
    </location>
</feature>
<feature type="sequence conflict" description="In Ref. 1; AAI70329." evidence="5" ref="1">
    <original>Q</original>
    <variation>K</variation>
    <location>
        <position position="121"/>
    </location>
</feature>
<feature type="sequence conflict" description="In Ref. 1; AAI70329." evidence="5" ref="1">
    <original>V</original>
    <variation>D</variation>
    <location>
        <position position="329"/>
    </location>
</feature>
<feature type="sequence conflict" description="In Ref. 1; AAI70329." evidence="5" ref="1">
    <original>L</original>
    <variation>P</variation>
    <location>
        <position position="413"/>
    </location>
</feature>
<feature type="sequence conflict" description="In Ref. 1; AAI70329." evidence="5" ref="1">
    <original>T</original>
    <variation>A</variation>
    <location>
        <position position="536"/>
    </location>
</feature>
<comment type="function">
    <text evidence="1">Required for pre-mRNA splicing as component of the spliceosome. Core component of the splicing-dependent multiprotein exon junction complex (EJC) deposited at splice junctions on mRNAs. The EJC is a dynamic structure consisting of core proteins and several peripheral nuclear and cytoplasmic associated factors that join the complex only transiently either during EJC assembly or during subsequent mRNA metabolism. The EJC marks the position of the exon-exon junction in the mature mRNA for the gene expression machinery and the core components remain bound to spliced mRNAs throughout all stages of mRNA metabolism thereby influencing downstream processes including nuclear mRNA export, subcellular mRNA localization, translation efficiency and nonsense-mediated mRNA decay (NMD). Binds spliced mRNA in sequence-independent manner, 20-24 nucleotides upstream of mRNA exon-exon junctions.</text>
</comment>
<comment type="subunit">
    <text evidence="1 3">Identified in the spliceosome C complex. Component of the mRNA splicing-dependent exon junction complex (EJC), which contains at least casc3, eif4a3, magoh, nxf1 and rbm8a (By similarity). Forms homooligomers (By similarity).</text>
</comment>
<comment type="subcellular location">
    <subcellularLocation>
        <location evidence="1">Cytoplasm</location>
    </subcellularLocation>
    <subcellularLocation>
        <location evidence="2">Cytoplasm</location>
        <location evidence="2">Perinuclear region</location>
    </subcellularLocation>
    <subcellularLocation>
        <location evidence="1">Nucleus</location>
    </subcellularLocation>
    <subcellularLocation>
        <location evidence="1">Nucleus speckle</location>
    </subcellularLocation>
    <subcellularLocation>
        <location evidence="1">Cytoplasm</location>
        <location evidence="1">Stress granule</location>
    </subcellularLocation>
    <subcellularLocation>
        <location evidence="3">Cytoplasm</location>
        <location evidence="3">Cytoplasmic ribonucleoprotein granule</location>
    </subcellularLocation>
    <subcellularLocation>
        <location evidence="3">Cell projection</location>
        <location evidence="3">Dendrite</location>
    </subcellularLocation>
    <text evidence="1 3">Shuttles between the nucleus and the cytoplasm in a xpo1/crm1-dependent manner. Transported to the cytoplasm as part of the exon junction complex (EJC) bound to mRNA (By similarity). In the dendrites of hippocampal neurons, localizes to dendritic ribonucleoprotein granules (By similarity).</text>
</comment>
<comment type="similarity">
    <text evidence="5">Belongs to the CASC3 family.</text>
</comment>
<proteinExistence type="evidence at transcript level"/>
<reference key="1">
    <citation type="submission" date="2008-11" db="EMBL/GenBank/DDBJ databases">
        <authorList>
            <consortium name="NIH - Xenopus Gene Collection (XGC) project"/>
        </authorList>
    </citation>
    <scope>NUCLEOTIDE SEQUENCE [LARGE SCALE MRNA]</scope>
    <source>
        <tissue>Embryo</tissue>
        <tissue>Oocyte</tissue>
    </source>
</reference>
<evidence type="ECO:0000250" key="1">
    <source>
        <dbReference type="UniProtKB" id="O15234"/>
    </source>
</evidence>
<evidence type="ECO:0000250" key="2">
    <source>
        <dbReference type="UniProtKB" id="Q8K3W3"/>
    </source>
</evidence>
<evidence type="ECO:0000250" key="3">
    <source>
        <dbReference type="UniProtKB" id="Q8K3X0"/>
    </source>
</evidence>
<evidence type="ECO:0000256" key="4">
    <source>
        <dbReference type="SAM" id="MobiDB-lite"/>
    </source>
</evidence>
<evidence type="ECO:0000305" key="5"/>
<gene>
    <name type="primary">casc3</name>
    <name type="synonym">mln51</name>
</gene>
<accession>A0JMU8</accession>
<accession>B7ZRY2</accession>